<name>RL2_CAUVC</name>
<comment type="function">
    <text evidence="1">One of the primary rRNA binding proteins. Required for association of the 30S and 50S subunits to form the 70S ribosome, for tRNA binding and peptide bond formation. It has been suggested to have peptidyltransferase activity; this is somewhat controversial. Makes several contacts with the 16S rRNA in the 70S ribosome.</text>
</comment>
<comment type="subunit">
    <text evidence="1">Part of the 50S ribosomal subunit. Forms a bridge to the 30S subunit in the 70S ribosome.</text>
</comment>
<comment type="similarity">
    <text evidence="1">Belongs to the universal ribosomal protein uL2 family.</text>
</comment>
<dbReference type="EMBL" id="AE005673">
    <property type="protein sequence ID" value="AAK23232.1"/>
    <property type="molecule type" value="Genomic_DNA"/>
</dbReference>
<dbReference type="PIR" id="D87404">
    <property type="entry name" value="D87404"/>
</dbReference>
<dbReference type="RefSeq" id="NP_420064.1">
    <property type="nucleotide sequence ID" value="NC_002696.2"/>
</dbReference>
<dbReference type="RefSeq" id="WP_010919130.1">
    <property type="nucleotide sequence ID" value="NC_002696.2"/>
</dbReference>
<dbReference type="SMR" id="Q9A8V0"/>
<dbReference type="STRING" id="190650.CC_1251"/>
<dbReference type="EnsemblBacteria" id="AAK23232">
    <property type="protein sequence ID" value="AAK23232"/>
    <property type="gene ID" value="CC_1251"/>
</dbReference>
<dbReference type="KEGG" id="ccr:CC_1251"/>
<dbReference type="PATRIC" id="fig|190650.5.peg.1276"/>
<dbReference type="eggNOG" id="COG0090">
    <property type="taxonomic scope" value="Bacteria"/>
</dbReference>
<dbReference type="HOGENOM" id="CLU_036235_2_1_5"/>
<dbReference type="BioCyc" id="CAULO:CC1251-MONOMER"/>
<dbReference type="Proteomes" id="UP000001816">
    <property type="component" value="Chromosome"/>
</dbReference>
<dbReference type="GO" id="GO:0015934">
    <property type="term" value="C:large ribosomal subunit"/>
    <property type="evidence" value="ECO:0007669"/>
    <property type="project" value="InterPro"/>
</dbReference>
<dbReference type="GO" id="GO:0019843">
    <property type="term" value="F:rRNA binding"/>
    <property type="evidence" value="ECO:0007669"/>
    <property type="project" value="UniProtKB-UniRule"/>
</dbReference>
<dbReference type="GO" id="GO:0003735">
    <property type="term" value="F:structural constituent of ribosome"/>
    <property type="evidence" value="ECO:0007669"/>
    <property type="project" value="InterPro"/>
</dbReference>
<dbReference type="GO" id="GO:0016740">
    <property type="term" value="F:transferase activity"/>
    <property type="evidence" value="ECO:0007669"/>
    <property type="project" value="InterPro"/>
</dbReference>
<dbReference type="GO" id="GO:0002181">
    <property type="term" value="P:cytoplasmic translation"/>
    <property type="evidence" value="ECO:0007669"/>
    <property type="project" value="TreeGrafter"/>
</dbReference>
<dbReference type="FunFam" id="2.30.30.30:FF:000001">
    <property type="entry name" value="50S ribosomal protein L2"/>
    <property type="match status" value="1"/>
</dbReference>
<dbReference type="FunFam" id="4.10.950.10:FF:000001">
    <property type="entry name" value="50S ribosomal protein L2"/>
    <property type="match status" value="1"/>
</dbReference>
<dbReference type="Gene3D" id="2.30.30.30">
    <property type="match status" value="1"/>
</dbReference>
<dbReference type="Gene3D" id="2.40.50.140">
    <property type="entry name" value="Nucleic acid-binding proteins"/>
    <property type="match status" value="1"/>
</dbReference>
<dbReference type="Gene3D" id="4.10.950.10">
    <property type="entry name" value="Ribosomal protein L2, domain 3"/>
    <property type="match status" value="1"/>
</dbReference>
<dbReference type="HAMAP" id="MF_01320_B">
    <property type="entry name" value="Ribosomal_uL2_B"/>
    <property type="match status" value="1"/>
</dbReference>
<dbReference type="InterPro" id="IPR012340">
    <property type="entry name" value="NA-bd_OB-fold"/>
</dbReference>
<dbReference type="InterPro" id="IPR014722">
    <property type="entry name" value="Rib_uL2_dom2"/>
</dbReference>
<dbReference type="InterPro" id="IPR002171">
    <property type="entry name" value="Ribosomal_uL2"/>
</dbReference>
<dbReference type="InterPro" id="IPR005880">
    <property type="entry name" value="Ribosomal_uL2_bac/org-type"/>
</dbReference>
<dbReference type="InterPro" id="IPR022669">
    <property type="entry name" value="Ribosomal_uL2_C"/>
</dbReference>
<dbReference type="InterPro" id="IPR022671">
    <property type="entry name" value="Ribosomal_uL2_CS"/>
</dbReference>
<dbReference type="InterPro" id="IPR014726">
    <property type="entry name" value="Ribosomal_uL2_dom3"/>
</dbReference>
<dbReference type="InterPro" id="IPR022666">
    <property type="entry name" value="Ribosomal_uL2_RNA-bd_dom"/>
</dbReference>
<dbReference type="InterPro" id="IPR008991">
    <property type="entry name" value="Translation_prot_SH3-like_sf"/>
</dbReference>
<dbReference type="NCBIfam" id="TIGR01171">
    <property type="entry name" value="rplB_bact"/>
    <property type="match status" value="1"/>
</dbReference>
<dbReference type="PANTHER" id="PTHR13691:SF5">
    <property type="entry name" value="LARGE RIBOSOMAL SUBUNIT PROTEIN UL2M"/>
    <property type="match status" value="1"/>
</dbReference>
<dbReference type="PANTHER" id="PTHR13691">
    <property type="entry name" value="RIBOSOMAL PROTEIN L2"/>
    <property type="match status" value="1"/>
</dbReference>
<dbReference type="Pfam" id="PF00181">
    <property type="entry name" value="Ribosomal_L2"/>
    <property type="match status" value="1"/>
</dbReference>
<dbReference type="Pfam" id="PF03947">
    <property type="entry name" value="Ribosomal_L2_C"/>
    <property type="match status" value="1"/>
</dbReference>
<dbReference type="PIRSF" id="PIRSF002158">
    <property type="entry name" value="Ribosomal_L2"/>
    <property type="match status" value="1"/>
</dbReference>
<dbReference type="SMART" id="SM01383">
    <property type="entry name" value="Ribosomal_L2"/>
    <property type="match status" value="1"/>
</dbReference>
<dbReference type="SMART" id="SM01382">
    <property type="entry name" value="Ribosomal_L2_C"/>
    <property type="match status" value="1"/>
</dbReference>
<dbReference type="SUPFAM" id="SSF50249">
    <property type="entry name" value="Nucleic acid-binding proteins"/>
    <property type="match status" value="1"/>
</dbReference>
<dbReference type="SUPFAM" id="SSF50104">
    <property type="entry name" value="Translation proteins SH3-like domain"/>
    <property type="match status" value="1"/>
</dbReference>
<dbReference type="PROSITE" id="PS00467">
    <property type="entry name" value="RIBOSOMAL_L2"/>
    <property type="match status" value="1"/>
</dbReference>
<proteinExistence type="inferred from homology"/>
<evidence type="ECO:0000255" key="1">
    <source>
        <dbReference type="HAMAP-Rule" id="MF_01320"/>
    </source>
</evidence>
<evidence type="ECO:0000256" key="2">
    <source>
        <dbReference type="SAM" id="MobiDB-lite"/>
    </source>
</evidence>
<evidence type="ECO:0000305" key="3"/>
<organism>
    <name type="scientific">Caulobacter vibrioides (strain ATCC 19089 / CIP 103742 / CB 15)</name>
    <name type="common">Caulobacter crescentus</name>
    <dbReference type="NCBI Taxonomy" id="190650"/>
    <lineage>
        <taxon>Bacteria</taxon>
        <taxon>Pseudomonadati</taxon>
        <taxon>Pseudomonadota</taxon>
        <taxon>Alphaproteobacteria</taxon>
        <taxon>Caulobacterales</taxon>
        <taxon>Caulobacteraceae</taxon>
        <taxon>Caulobacter</taxon>
    </lineage>
</organism>
<gene>
    <name evidence="1" type="primary">rplB</name>
    <name type="ordered locus">CC_1251</name>
</gene>
<keyword id="KW-1185">Reference proteome</keyword>
<keyword id="KW-0687">Ribonucleoprotein</keyword>
<keyword id="KW-0689">Ribosomal protein</keyword>
<keyword id="KW-0694">RNA-binding</keyword>
<keyword id="KW-0699">rRNA-binding</keyword>
<feature type="chain" id="PRO_0000129544" description="Large ribosomal subunit protein uL2">
    <location>
        <begin position="1"/>
        <end position="279"/>
    </location>
</feature>
<feature type="region of interest" description="Disordered" evidence="2">
    <location>
        <begin position="222"/>
        <end position="279"/>
    </location>
</feature>
<feature type="compositionally biased region" description="Basic residues" evidence="2">
    <location>
        <begin position="269"/>
        <end position="279"/>
    </location>
</feature>
<reference key="1">
    <citation type="journal article" date="2001" name="Proc. Natl. Acad. Sci. U.S.A.">
        <title>Complete genome sequence of Caulobacter crescentus.</title>
        <authorList>
            <person name="Nierman W.C."/>
            <person name="Feldblyum T.V."/>
            <person name="Laub M.T."/>
            <person name="Paulsen I.T."/>
            <person name="Nelson K.E."/>
            <person name="Eisen J.A."/>
            <person name="Heidelberg J.F."/>
            <person name="Alley M.R.K."/>
            <person name="Ohta N."/>
            <person name="Maddock J.R."/>
            <person name="Potocka I."/>
            <person name="Nelson W.C."/>
            <person name="Newton A."/>
            <person name="Stephens C."/>
            <person name="Phadke N.D."/>
            <person name="Ely B."/>
            <person name="DeBoy R.T."/>
            <person name="Dodson R.J."/>
            <person name="Durkin A.S."/>
            <person name="Gwinn M.L."/>
            <person name="Haft D.H."/>
            <person name="Kolonay J.F."/>
            <person name="Smit J."/>
            <person name="Craven M.B."/>
            <person name="Khouri H.M."/>
            <person name="Shetty J."/>
            <person name="Berry K.J."/>
            <person name="Utterback T.R."/>
            <person name="Tran K."/>
            <person name="Wolf A.M."/>
            <person name="Vamathevan J.J."/>
            <person name="Ermolaeva M.D."/>
            <person name="White O."/>
            <person name="Salzberg S.L."/>
            <person name="Venter J.C."/>
            <person name="Shapiro L."/>
            <person name="Fraser C.M."/>
        </authorList>
    </citation>
    <scope>NUCLEOTIDE SEQUENCE [LARGE SCALE GENOMIC DNA]</scope>
    <source>
        <strain>ATCC 19089 / CIP 103742 / CB 15</strain>
    </source>
</reference>
<accession>Q9A8V0</accession>
<sequence>MALKQFNPTSPGQRGLVLIDRSELHKGRPEKKLVEGLTKSGGRGGNGRIAVRFRGGGAKRLYRLVDFKRRKQGVATVVRLEYDPNRTAFIALIKYQADGELAYILAPQRLKAGDEVVTAEKVDVKPGNASPLRTLPIGTIIHNIELKPAKGGQIARSAGAYAQLVGRDAGYAQIRLNSGELRMVLDTCMATVGAVSNPDHMNQNLGKAGRSRHMGRRPHVRGVAMNPVDHPHGGGEGRTSGGRHPVTPAGKPTKGAKTRVNKATDKFIIRSRHKAKKGR</sequence>
<protein>
    <recommendedName>
        <fullName evidence="1">Large ribosomal subunit protein uL2</fullName>
    </recommendedName>
    <alternativeName>
        <fullName evidence="3">50S ribosomal protein L2</fullName>
    </alternativeName>
</protein>